<proteinExistence type="inferred from homology"/>
<name>RECO_NITMU</name>
<organism>
    <name type="scientific">Nitrosospira multiformis (strain ATCC 25196 / NCIMB 11849 / C 71)</name>
    <dbReference type="NCBI Taxonomy" id="323848"/>
    <lineage>
        <taxon>Bacteria</taxon>
        <taxon>Pseudomonadati</taxon>
        <taxon>Pseudomonadota</taxon>
        <taxon>Betaproteobacteria</taxon>
        <taxon>Nitrosomonadales</taxon>
        <taxon>Nitrosomonadaceae</taxon>
        <taxon>Nitrosospira</taxon>
    </lineage>
</organism>
<keyword id="KW-0227">DNA damage</keyword>
<keyword id="KW-0233">DNA recombination</keyword>
<keyword id="KW-0234">DNA repair</keyword>
<keyword id="KW-1185">Reference proteome</keyword>
<dbReference type="EMBL" id="CP000103">
    <property type="protein sequence ID" value="ABB75054.1"/>
    <property type="molecule type" value="Genomic_DNA"/>
</dbReference>
<dbReference type="RefSeq" id="WP_011381074.1">
    <property type="nucleotide sequence ID" value="NC_007614.1"/>
</dbReference>
<dbReference type="SMR" id="Q2Y867"/>
<dbReference type="STRING" id="323848.Nmul_A1757"/>
<dbReference type="KEGG" id="nmu:Nmul_A1757"/>
<dbReference type="eggNOG" id="COG1381">
    <property type="taxonomic scope" value="Bacteria"/>
</dbReference>
<dbReference type="HOGENOM" id="CLU_066645_1_0_4"/>
<dbReference type="OrthoDB" id="9804792at2"/>
<dbReference type="Proteomes" id="UP000002718">
    <property type="component" value="Chromosome"/>
</dbReference>
<dbReference type="GO" id="GO:0043590">
    <property type="term" value="C:bacterial nucleoid"/>
    <property type="evidence" value="ECO:0007669"/>
    <property type="project" value="TreeGrafter"/>
</dbReference>
<dbReference type="GO" id="GO:0006310">
    <property type="term" value="P:DNA recombination"/>
    <property type="evidence" value="ECO:0007669"/>
    <property type="project" value="UniProtKB-UniRule"/>
</dbReference>
<dbReference type="GO" id="GO:0006302">
    <property type="term" value="P:double-strand break repair"/>
    <property type="evidence" value="ECO:0007669"/>
    <property type="project" value="TreeGrafter"/>
</dbReference>
<dbReference type="Gene3D" id="2.40.50.140">
    <property type="entry name" value="Nucleic acid-binding proteins"/>
    <property type="match status" value="1"/>
</dbReference>
<dbReference type="Gene3D" id="1.20.1440.120">
    <property type="entry name" value="Recombination protein O, C-terminal domain"/>
    <property type="match status" value="1"/>
</dbReference>
<dbReference type="HAMAP" id="MF_00201">
    <property type="entry name" value="RecO"/>
    <property type="match status" value="1"/>
</dbReference>
<dbReference type="InterPro" id="IPR037278">
    <property type="entry name" value="ARFGAP/RecO"/>
</dbReference>
<dbReference type="InterPro" id="IPR022572">
    <property type="entry name" value="DNA_rep/recomb_RecO_N"/>
</dbReference>
<dbReference type="InterPro" id="IPR012340">
    <property type="entry name" value="NA-bd_OB-fold"/>
</dbReference>
<dbReference type="InterPro" id="IPR003717">
    <property type="entry name" value="RecO"/>
</dbReference>
<dbReference type="InterPro" id="IPR042242">
    <property type="entry name" value="RecO_C"/>
</dbReference>
<dbReference type="NCBIfam" id="TIGR00613">
    <property type="entry name" value="reco"/>
    <property type="match status" value="1"/>
</dbReference>
<dbReference type="PANTHER" id="PTHR33991">
    <property type="entry name" value="DNA REPAIR PROTEIN RECO"/>
    <property type="match status" value="1"/>
</dbReference>
<dbReference type="PANTHER" id="PTHR33991:SF1">
    <property type="entry name" value="DNA REPAIR PROTEIN RECO"/>
    <property type="match status" value="1"/>
</dbReference>
<dbReference type="Pfam" id="PF02565">
    <property type="entry name" value="RecO_C"/>
    <property type="match status" value="1"/>
</dbReference>
<dbReference type="Pfam" id="PF11967">
    <property type="entry name" value="RecO_N"/>
    <property type="match status" value="1"/>
</dbReference>
<dbReference type="SUPFAM" id="SSF57863">
    <property type="entry name" value="ArfGap/RecO-like zinc finger"/>
    <property type="match status" value="1"/>
</dbReference>
<dbReference type="SUPFAM" id="SSF50249">
    <property type="entry name" value="Nucleic acid-binding proteins"/>
    <property type="match status" value="1"/>
</dbReference>
<sequence>MNVDKQRQEAQPAFVLHSYPYLETSLIVEVFTQNSGRIAVVAKGAKRPTSPLRGLLRAFQPLLLSWGGKSELRTLHKAEWQGGQLPLQGTALICGFYLNELLIRLLHRNDPHERLFACYQEALSDLSTASDYIPILRRFEQRLLQEMGYALTLDHDVSSGKPIKPTQMYCYEIERGPIASSNGSCPFNLELSGKTLLDMYQGDYLAPLTRLQSRILMRHLLSHYLGDKPLHTRQLLKEFQQL</sequence>
<reference key="1">
    <citation type="submission" date="2005-08" db="EMBL/GenBank/DDBJ databases">
        <title>Complete sequence of chromosome 1 of Nitrosospira multiformis ATCC 25196.</title>
        <authorList>
            <person name="Copeland A."/>
            <person name="Lucas S."/>
            <person name="Lapidus A."/>
            <person name="Barry K."/>
            <person name="Detter J.C."/>
            <person name="Glavina T."/>
            <person name="Hammon N."/>
            <person name="Israni S."/>
            <person name="Pitluck S."/>
            <person name="Chain P."/>
            <person name="Malfatti S."/>
            <person name="Shin M."/>
            <person name="Vergez L."/>
            <person name="Schmutz J."/>
            <person name="Larimer F."/>
            <person name="Land M."/>
            <person name="Hauser L."/>
            <person name="Kyrpides N."/>
            <person name="Lykidis A."/>
            <person name="Richardson P."/>
        </authorList>
    </citation>
    <scope>NUCLEOTIDE SEQUENCE [LARGE SCALE GENOMIC DNA]</scope>
    <source>
        <strain>ATCC 25196 / NCIMB 11849 / C 71</strain>
    </source>
</reference>
<evidence type="ECO:0000255" key="1">
    <source>
        <dbReference type="HAMAP-Rule" id="MF_00201"/>
    </source>
</evidence>
<gene>
    <name evidence="1" type="primary">recO</name>
    <name type="ordered locus">Nmul_A1757</name>
</gene>
<feature type="chain" id="PRO_0000264828" description="DNA repair protein RecO">
    <location>
        <begin position="1"/>
        <end position="242"/>
    </location>
</feature>
<comment type="function">
    <text evidence="1">Involved in DNA repair and RecF pathway recombination.</text>
</comment>
<comment type="similarity">
    <text evidence="1">Belongs to the RecO family.</text>
</comment>
<protein>
    <recommendedName>
        <fullName evidence="1">DNA repair protein RecO</fullName>
    </recommendedName>
    <alternativeName>
        <fullName evidence="1">Recombination protein O</fullName>
    </alternativeName>
</protein>
<accession>Q2Y867</accession>